<proteinExistence type="inferred from homology"/>
<keyword id="KW-0030">Aminoacyl-tRNA synthetase</keyword>
<keyword id="KW-0067">ATP-binding</keyword>
<keyword id="KW-0963">Cytoplasm</keyword>
<keyword id="KW-0436">Ligase</keyword>
<keyword id="KW-0547">Nucleotide-binding</keyword>
<keyword id="KW-0648">Protein biosynthesis</keyword>
<feature type="chain" id="PRO_1000076228" description="Arginine--tRNA ligase">
    <location>
        <begin position="1"/>
        <end position="577"/>
    </location>
</feature>
<feature type="short sequence motif" description="'HIGH' region">
    <location>
        <begin position="122"/>
        <end position="132"/>
    </location>
</feature>
<protein>
    <recommendedName>
        <fullName evidence="1">Arginine--tRNA ligase</fullName>
        <ecNumber evidence="1">6.1.1.19</ecNumber>
    </recommendedName>
    <alternativeName>
        <fullName evidence="1">Arginyl-tRNA synthetase</fullName>
        <shortName evidence="1">ArgRS</shortName>
    </alternativeName>
</protein>
<evidence type="ECO:0000255" key="1">
    <source>
        <dbReference type="HAMAP-Rule" id="MF_00123"/>
    </source>
</evidence>
<gene>
    <name evidence="1" type="primary">argS</name>
    <name type="ordered locus">SPAB_01253</name>
</gene>
<organism>
    <name type="scientific">Salmonella paratyphi B (strain ATCC BAA-1250 / SPB7)</name>
    <dbReference type="NCBI Taxonomy" id="1016998"/>
    <lineage>
        <taxon>Bacteria</taxon>
        <taxon>Pseudomonadati</taxon>
        <taxon>Pseudomonadota</taxon>
        <taxon>Gammaproteobacteria</taxon>
        <taxon>Enterobacterales</taxon>
        <taxon>Enterobacteriaceae</taxon>
        <taxon>Salmonella</taxon>
    </lineage>
</organism>
<sequence length="577" mass="64266">MNIQALLSEKVSQAMIAAGAPADCEPQVRQSAKVQFGDYQANGMMAVAKKLGMAPRQLAEQVLTHLDLSGIASKVEIAGPGFINIFLEPAFLAEQVQQALASDRLGVSQPTRQTIVVDYSAPNVAKEMHVGHLRSTIIGDAAVRTLEFLGHHVIRANHVGDWGTQFGMLIAWLEKQQQENAGDMALADLEGFYRDAKKHYDEDEAFAERARNYVVKLQSGDTYFREMWRKLVDITMTQNQITYDRLNVTLTRDDVMGESLYNPMLPGIVADLKAKGLAVESEGATVVFLDEFKNKEGDPMGVIIQKKDGGYLYTTTDIACAKYRYETLHADRVLYYIDSRQHQHLMQAWTIVRKAGYVPDSVPLEHHMFGMMLGKDGKPFKTRAGGTVKLADLLDEALERARRLVAEKNPDMSADELEKLANAVGIGAVKYADLSKNRTTDYIFDWDNMLAFEGNTAPYMQYAYTRVLSVFRKADIDEQALASAPVIISEDREAQLAARLLQFEETLTVVAREGTPHVMCAYLYDVAGLFSGFYEHCPILSAENDAVRNSRLKLAQLTAKTLKLGLDTLGIETVERM</sequence>
<reference key="1">
    <citation type="submission" date="2007-11" db="EMBL/GenBank/DDBJ databases">
        <authorList>
            <consortium name="The Salmonella enterica serovar Paratyphi B Genome Sequencing Project"/>
            <person name="McClelland M."/>
            <person name="Sanderson E.K."/>
            <person name="Porwollik S."/>
            <person name="Spieth J."/>
            <person name="Clifton W.S."/>
            <person name="Fulton R."/>
            <person name="Cordes M."/>
            <person name="Wollam A."/>
            <person name="Shah N."/>
            <person name="Pepin K."/>
            <person name="Bhonagiri V."/>
            <person name="Nash W."/>
            <person name="Johnson M."/>
            <person name="Thiruvilangam P."/>
            <person name="Wilson R."/>
        </authorList>
    </citation>
    <scope>NUCLEOTIDE SEQUENCE [LARGE SCALE GENOMIC DNA]</scope>
    <source>
        <strain>ATCC BAA-1250 / SPB7</strain>
    </source>
</reference>
<dbReference type="EC" id="6.1.1.19" evidence="1"/>
<dbReference type="EMBL" id="CP000886">
    <property type="protein sequence ID" value="ABX66665.1"/>
    <property type="molecule type" value="Genomic_DNA"/>
</dbReference>
<dbReference type="RefSeq" id="WP_001025362.1">
    <property type="nucleotide sequence ID" value="NC_010102.1"/>
</dbReference>
<dbReference type="SMR" id="A9MUA9"/>
<dbReference type="KEGG" id="spq:SPAB_01253"/>
<dbReference type="PATRIC" id="fig|1016998.12.peg.1180"/>
<dbReference type="HOGENOM" id="CLU_006406_5_1_6"/>
<dbReference type="BioCyc" id="SENT1016998:SPAB_RS05200-MONOMER"/>
<dbReference type="Proteomes" id="UP000008556">
    <property type="component" value="Chromosome"/>
</dbReference>
<dbReference type="GO" id="GO:0005737">
    <property type="term" value="C:cytoplasm"/>
    <property type="evidence" value="ECO:0007669"/>
    <property type="project" value="UniProtKB-SubCell"/>
</dbReference>
<dbReference type="GO" id="GO:0004814">
    <property type="term" value="F:arginine-tRNA ligase activity"/>
    <property type="evidence" value="ECO:0007669"/>
    <property type="project" value="UniProtKB-UniRule"/>
</dbReference>
<dbReference type="GO" id="GO:0005524">
    <property type="term" value="F:ATP binding"/>
    <property type="evidence" value="ECO:0007669"/>
    <property type="project" value="UniProtKB-UniRule"/>
</dbReference>
<dbReference type="GO" id="GO:0006420">
    <property type="term" value="P:arginyl-tRNA aminoacylation"/>
    <property type="evidence" value="ECO:0007669"/>
    <property type="project" value="UniProtKB-UniRule"/>
</dbReference>
<dbReference type="CDD" id="cd07956">
    <property type="entry name" value="Anticodon_Ia_Arg"/>
    <property type="match status" value="1"/>
</dbReference>
<dbReference type="CDD" id="cd00671">
    <property type="entry name" value="ArgRS_core"/>
    <property type="match status" value="1"/>
</dbReference>
<dbReference type="FunFam" id="1.10.730.10:FF:000001">
    <property type="entry name" value="Arginine--tRNA ligase"/>
    <property type="match status" value="1"/>
</dbReference>
<dbReference type="FunFam" id="3.30.1360.70:FF:000001">
    <property type="entry name" value="Arginine--tRNA ligase"/>
    <property type="match status" value="1"/>
</dbReference>
<dbReference type="FunFam" id="3.40.50.620:FF:000030">
    <property type="entry name" value="Arginine--tRNA ligase"/>
    <property type="match status" value="1"/>
</dbReference>
<dbReference type="Gene3D" id="3.30.1360.70">
    <property type="entry name" value="Arginyl tRNA synthetase N-terminal domain"/>
    <property type="match status" value="1"/>
</dbReference>
<dbReference type="Gene3D" id="3.40.50.620">
    <property type="entry name" value="HUPs"/>
    <property type="match status" value="1"/>
</dbReference>
<dbReference type="Gene3D" id="1.10.730.10">
    <property type="entry name" value="Isoleucyl-tRNA Synthetase, Domain 1"/>
    <property type="match status" value="1"/>
</dbReference>
<dbReference type="HAMAP" id="MF_00123">
    <property type="entry name" value="Arg_tRNA_synth"/>
    <property type="match status" value="1"/>
</dbReference>
<dbReference type="InterPro" id="IPR001412">
    <property type="entry name" value="aa-tRNA-synth_I_CS"/>
</dbReference>
<dbReference type="InterPro" id="IPR001278">
    <property type="entry name" value="Arg-tRNA-ligase"/>
</dbReference>
<dbReference type="InterPro" id="IPR005148">
    <property type="entry name" value="Arg-tRNA-synth_N"/>
</dbReference>
<dbReference type="InterPro" id="IPR036695">
    <property type="entry name" value="Arg-tRNA-synth_N_sf"/>
</dbReference>
<dbReference type="InterPro" id="IPR035684">
    <property type="entry name" value="ArgRS_core"/>
</dbReference>
<dbReference type="InterPro" id="IPR008909">
    <property type="entry name" value="DALR_anticod-bd"/>
</dbReference>
<dbReference type="InterPro" id="IPR014729">
    <property type="entry name" value="Rossmann-like_a/b/a_fold"/>
</dbReference>
<dbReference type="InterPro" id="IPR009080">
    <property type="entry name" value="tRNAsynth_Ia_anticodon-bd"/>
</dbReference>
<dbReference type="NCBIfam" id="TIGR00456">
    <property type="entry name" value="argS"/>
    <property type="match status" value="1"/>
</dbReference>
<dbReference type="PANTHER" id="PTHR11956:SF5">
    <property type="entry name" value="ARGININE--TRNA LIGASE, CYTOPLASMIC"/>
    <property type="match status" value="1"/>
</dbReference>
<dbReference type="PANTHER" id="PTHR11956">
    <property type="entry name" value="ARGINYL-TRNA SYNTHETASE"/>
    <property type="match status" value="1"/>
</dbReference>
<dbReference type="Pfam" id="PF03485">
    <property type="entry name" value="Arg_tRNA_synt_N"/>
    <property type="match status" value="1"/>
</dbReference>
<dbReference type="Pfam" id="PF05746">
    <property type="entry name" value="DALR_1"/>
    <property type="match status" value="1"/>
</dbReference>
<dbReference type="Pfam" id="PF00750">
    <property type="entry name" value="tRNA-synt_1d"/>
    <property type="match status" value="1"/>
</dbReference>
<dbReference type="PRINTS" id="PR01038">
    <property type="entry name" value="TRNASYNTHARG"/>
</dbReference>
<dbReference type="SMART" id="SM01016">
    <property type="entry name" value="Arg_tRNA_synt_N"/>
    <property type="match status" value="1"/>
</dbReference>
<dbReference type="SMART" id="SM00836">
    <property type="entry name" value="DALR_1"/>
    <property type="match status" value="1"/>
</dbReference>
<dbReference type="SUPFAM" id="SSF47323">
    <property type="entry name" value="Anticodon-binding domain of a subclass of class I aminoacyl-tRNA synthetases"/>
    <property type="match status" value="1"/>
</dbReference>
<dbReference type="SUPFAM" id="SSF55190">
    <property type="entry name" value="Arginyl-tRNA synthetase (ArgRS), N-terminal 'additional' domain"/>
    <property type="match status" value="1"/>
</dbReference>
<dbReference type="SUPFAM" id="SSF52374">
    <property type="entry name" value="Nucleotidylyl transferase"/>
    <property type="match status" value="1"/>
</dbReference>
<dbReference type="PROSITE" id="PS00178">
    <property type="entry name" value="AA_TRNA_LIGASE_I"/>
    <property type="match status" value="1"/>
</dbReference>
<comment type="catalytic activity">
    <reaction evidence="1">
        <text>tRNA(Arg) + L-arginine + ATP = L-arginyl-tRNA(Arg) + AMP + diphosphate</text>
        <dbReference type="Rhea" id="RHEA:20301"/>
        <dbReference type="Rhea" id="RHEA-COMP:9658"/>
        <dbReference type="Rhea" id="RHEA-COMP:9673"/>
        <dbReference type="ChEBI" id="CHEBI:30616"/>
        <dbReference type="ChEBI" id="CHEBI:32682"/>
        <dbReference type="ChEBI" id="CHEBI:33019"/>
        <dbReference type="ChEBI" id="CHEBI:78442"/>
        <dbReference type="ChEBI" id="CHEBI:78513"/>
        <dbReference type="ChEBI" id="CHEBI:456215"/>
        <dbReference type="EC" id="6.1.1.19"/>
    </reaction>
</comment>
<comment type="subunit">
    <text evidence="1">Monomer.</text>
</comment>
<comment type="subcellular location">
    <subcellularLocation>
        <location evidence="1">Cytoplasm</location>
    </subcellularLocation>
</comment>
<comment type="similarity">
    <text evidence="1">Belongs to the class-I aminoacyl-tRNA synthetase family.</text>
</comment>
<accession>A9MUA9</accession>
<name>SYR_SALPB</name>